<accession>Q5PQN5</accession>
<comment type="function">
    <text evidence="2 3">E3 ubiquitin ligase that plays an important role in regulating cardiac development and contractility, muscle growth, metabolism, and fiber-type differentiation. Acts as a critical factor that regulates cardiomyocyte size during development in concert with TRIM63 by regulating E2F1-mediated gene expression. Plays a role in apoptosis induction in cardiomyocytes by promoting ubiquitination of the DUSP1 phosphatase. Promotes non-canonical NF-kappa-B signaling and B-cell-mediated immune responses by mediating NFKB2 'Lys-48'-linked ubiquitination and processing. In turn, NFKB2 is further processed by valosin-containing protein/VCP, an ATPase that mediates ubiquitin-dependent protein degradation by the proteasome. May play a role in preventing macrophages from producing inflammatory factors and migrating by downregulating the level of nuclear NF-kappa-B subunit RELA. Also modifies PPARG via polyubiquitination and accelerates PPARG proteasomal degradation to inhibit its activity.</text>
</comment>
<comment type="catalytic activity">
    <reaction evidence="3">
        <text>S-ubiquitinyl-[E2 ubiquitin-conjugating enzyme]-L-cysteine + [acceptor protein]-L-lysine = [E2 ubiquitin-conjugating enzyme]-L-cysteine + N(6)-ubiquitinyl-[acceptor protein]-L-lysine.</text>
        <dbReference type="EC" id="2.3.2.27"/>
    </reaction>
</comment>
<comment type="subunit">
    <text evidence="1 9">Homooligomer and heterooligomer (Probable). Interacts with titin/TTN. Interacts with myosins. Interacts with SQSTM1 and NBR1. Probably interacts with TRIM63 and TRIM54 (By similarity).</text>
</comment>
<comment type="subcellular location">
    <subcellularLocation>
        <location evidence="2">Nucleus</location>
    </subcellularLocation>
    <subcellularLocation>
        <location evidence="2">Cytoplasm</location>
    </subcellularLocation>
    <text evidence="2">TLR4 signaling pathway promotes nuclear translocation.</text>
</comment>
<comment type="PTM">
    <text evidence="3">Targeted for degradation through the proteasomal and lysosomal pathways in the presence of SUMO3.</text>
</comment>
<reference key="1">
    <citation type="journal article" date="2004" name="Genome Res.">
        <title>The status, quality, and expansion of the NIH full-length cDNA project: the Mammalian Gene Collection (MGC).</title>
        <authorList>
            <consortium name="The MGC Project Team"/>
        </authorList>
    </citation>
    <scope>NUCLEOTIDE SEQUENCE [LARGE SCALE MRNA]</scope>
    <source>
        <tissue>Heart</tissue>
    </source>
</reference>
<reference key="2">
    <citation type="journal article" date="2002" name="J. Cell Sci.">
        <title>Transient association of titin and myosin with microtubules in nascent myofibrils directed by the MURF2 RING-finger protein.</title>
        <authorList>
            <person name="Pizon V."/>
            <person name="Iakovenko A."/>
            <person name="van der Ven P.F.M."/>
            <person name="Kelly R."/>
            <person name="Fatu C."/>
            <person name="Fuerst D.O."/>
            <person name="Karsenti E."/>
            <person name="Gautel M."/>
        </authorList>
    </citation>
    <scope>SUBCELLULAR LOCATION</scope>
    <source>
        <tissue>Heart muscle</tissue>
        <tissue>Skeletal muscle</tissue>
    </source>
</reference>
<reference key="3">
    <citation type="journal article" date="2004" name="J. Cell Sci.">
        <title>Muscle-specific RING finger-2 (MURF-2) is important for microtubule, intermediate filament and sarcomeric M-line maintenance in striated muscle development.</title>
        <authorList>
            <person name="McElhinny A.S."/>
            <person name="Perry C.N."/>
            <person name="Witt C.C."/>
            <person name="Labeit S."/>
            <person name="Gregorio C.C."/>
        </authorList>
    </citation>
    <scope>SUBCELLULAR LOCATION</scope>
</reference>
<reference key="4">
    <citation type="journal article" date="2005" name="Science">
        <title>The kinase domain of titin controls muscle gene expression and protein turnover.</title>
        <authorList>
            <person name="Lange S."/>
            <person name="Xiang F."/>
            <person name="Yakovenko A."/>
            <person name="Vihola A."/>
            <person name="Hackman P."/>
            <person name="Rostkova E."/>
            <person name="Kristensen J."/>
            <person name="Brandmeier B."/>
            <person name="Franzen G."/>
            <person name="Hedberg B."/>
            <person name="Gunnarsson L.G."/>
            <person name="Hughes S.M."/>
            <person name="Marchand S."/>
            <person name="Sejersen T."/>
            <person name="Richard I."/>
            <person name="Edstroem L."/>
            <person name="Ehler E."/>
            <person name="Udd B."/>
            <person name="Gautel M."/>
        </authorList>
    </citation>
    <scope>SUBCELLULAR LOCATION</scope>
    <scope>FUNCTION</scope>
</reference>
<reference key="5">
    <citation type="journal article" date="2012" name="Nat. Commun.">
        <title>Quantitative maps of protein phosphorylation sites across 14 different rat organs and tissues.</title>
        <authorList>
            <person name="Lundby A."/>
            <person name="Secher A."/>
            <person name="Lage K."/>
            <person name="Nordsborg N.B."/>
            <person name="Dmytriyev A."/>
            <person name="Lundby C."/>
            <person name="Olsen J.V."/>
        </authorList>
    </citation>
    <scope>IDENTIFICATION BY MASS SPECTROMETRY [LARGE SCALE ANALYSIS]</scope>
</reference>
<sequence length="545" mass="59980">MSTSLNYKSFSKEQQTMDNLEKQLICPICLEMFTKPVVILPCQHNLCRKCASDIFQASNPYLPTRGGTTVASGGRFRCPSCRHEVVLDRHGVYGLQRNLLVENIIDIYKQESTRPEKKLDQPMCEEHEEERINIYCLNCEVPTCSLCKVFGAHKDCQVAPLTHVFQRQKSELSDGIAVLVGSNDRVQGVISQLEDTCKTIEECCRKQKQDLCEKFDHLYSILEERKTEMTQAITRTQEEKLEHVRTLIRKYSDHLENVSKLVESGIQFMDEPEMAVFLQNAKTLLQKITEASKAFQMEKIEQGYEIMNNFTVNLNREEKIIREIDFSREEEDEDDEGEVDEEGEGEDAVEVEEAENVQVASSGEEETLEKAAEPSELAAEIQAASGPLLASSPDSVSSLPPAADVLVTQGEVVPTDSQQTTQSETSGPSAAETADPLFYPSWYKGQSRKMISNPPHTPGGEGLSQIGPSAAEDSSVQSAEVAEAAANEQAAVSGKESSSTAATSQIGFEASSPQGQAAALGSGGGADSEPARHVFSFSWLNSLNE</sequence>
<keyword id="KW-0175">Coiled coil</keyword>
<keyword id="KW-0963">Cytoplasm</keyword>
<keyword id="KW-0479">Metal-binding</keyword>
<keyword id="KW-0514">Muscle protein</keyword>
<keyword id="KW-0539">Nucleus</keyword>
<keyword id="KW-1185">Reference proteome</keyword>
<keyword id="KW-0808">Transferase</keyword>
<keyword id="KW-0862">Zinc</keyword>
<keyword id="KW-0863">Zinc-finger</keyword>
<proteinExistence type="evidence at protein level"/>
<name>TRI55_RAT</name>
<organism>
    <name type="scientific">Rattus norvegicus</name>
    <name type="common">Rat</name>
    <dbReference type="NCBI Taxonomy" id="10116"/>
    <lineage>
        <taxon>Eukaryota</taxon>
        <taxon>Metazoa</taxon>
        <taxon>Chordata</taxon>
        <taxon>Craniata</taxon>
        <taxon>Vertebrata</taxon>
        <taxon>Euteleostomi</taxon>
        <taxon>Mammalia</taxon>
        <taxon>Eutheria</taxon>
        <taxon>Euarchontoglires</taxon>
        <taxon>Glires</taxon>
        <taxon>Rodentia</taxon>
        <taxon>Myomorpha</taxon>
        <taxon>Muroidea</taxon>
        <taxon>Muridae</taxon>
        <taxon>Murinae</taxon>
        <taxon>Rattus</taxon>
    </lineage>
</organism>
<protein>
    <recommendedName>
        <fullName>Tripartite motif-containing protein 55</fullName>
        <ecNumber evidence="3">2.3.2.27</ecNumber>
    </recommendedName>
    <alternativeName>
        <fullName>Muscle-specific RING finger protein 2</fullName>
        <shortName>MuRF-2</shortName>
        <shortName>MuRF2</shortName>
    </alternativeName>
    <alternativeName>
        <fullName>RING finger protein 29</fullName>
    </alternativeName>
</protein>
<feature type="chain" id="PRO_0000056287" description="Tripartite motif-containing protein 55">
    <location>
        <begin position="1"/>
        <end position="545"/>
    </location>
</feature>
<feature type="domain" description="COS" evidence="7">
    <location>
        <begin position="269"/>
        <end position="327"/>
    </location>
</feature>
<feature type="zinc finger region" description="RING-type" evidence="6">
    <location>
        <begin position="26"/>
        <end position="82"/>
    </location>
</feature>
<feature type="zinc finger region" description="B box-type" evidence="5">
    <location>
        <begin position="119"/>
        <end position="161"/>
    </location>
</feature>
<feature type="region of interest" description="Disordered" evidence="8">
    <location>
        <begin position="324"/>
        <end position="378"/>
    </location>
</feature>
<feature type="region of interest" description="Disordered" evidence="8">
    <location>
        <begin position="406"/>
        <end position="528"/>
    </location>
</feature>
<feature type="coiled-coil region" evidence="4">
    <location>
        <begin position="219"/>
        <end position="258"/>
    </location>
</feature>
<feature type="compositionally biased region" description="Acidic residues" evidence="8">
    <location>
        <begin position="328"/>
        <end position="355"/>
    </location>
</feature>
<feature type="compositionally biased region" description="Low complexity" evidence="8">
    <location>
        <begin position="417"/>
        <end position="426"/>
    </location>
</feature>
<feature type="compositionally biased region" description="Low complexity" evidence="8">
    <location>
        <begin position="469"/>
        <end position="493"/>
    </location>
</feature>
<feature type="compositionally biased region" description="Polar residues" evidence="8">
    <location>
        <begin position="495"/>
        <end position="506"/>
    </location>
</feature>
<feature type="compositionally biased region" description="Low complexity" evidence="8">
    <location>
        <begin position="510"/>
        <end position="520"/>
    </location>
</feature>
<feature type="binding site" evidence="5">
    <location>
        <position position="124"/>
    </location>
    <ligand>
        <name>Zn(2+)</name>
        <dbReference type="ChEBI" id="CHEBI:29105"/>
    </ligand>
</feature>
<feature type="binding site" evidence="5">
    <location>
        <position position="127"/>
    </location>
    <ligand>
        <name>Zn(2+)</name>
        <dbReference type="ChEBI" id="CHEBI:29105"/>
    </ligand>
</feature>
<feature type="binding site" evidence="5">
    <location>
        <position position="147"/>
    </location>
    <ligand>
        <name>Zn(2+)</name>
        <dbReference type="ChEBI" id="CHEBI:29105"/>
    </ligand>
</feature>
<feature type="binding site" evidence="5">
    <location>
        <position position="153"/>
    </location>
    <ligand>
        <name>Zn(2+)</name>
        <dbReference type="ChEBI" id="CHEBI:29105"/>
    </ligand>
</feature>
<dbReference type="EC" id="2.3.2.27" evidence="3"/>
<dbReference type="EMBL" id="BC087100">
    <property type="protein sequence ID" value="AAH87100.1"/>
    <property type="molecule type" value="mRNA"/>
</dbReference>
<dbReference type="RefSeq" id="NP_001012218.1">
    <property type="nucleotide sequence ID" value="NM_001012218.1"/>
</dbReference>
<dbReference type="SMR" id="Q5PQN5"/>
<dbReference type="BioGRID" id="265529">
    <property type="interactions" value="1"/>
</dbReference>
<dbReference type="CORUM" id="Q5PQN5"/>
<dbReference type="FunCoup" id="Q5PQN5">
    <property type="interactions" value="135"/>
</dbReference>
<dbReference type="IntAct" id="Q5PQN5">
    <property type="interactions" value="2"/>
</dbReference>
<dbReference type="STRING" id="10116.ENSRNOP00000017125"/>
<dbReference type="PhosphoSitePlus" id="Q5PQN5"/>
<dbReference type="PaxDb" id="10116-ENSRNOP00000017125"/>
<dbReference type="GeneID" id="365751"/>
<dbReference type="KEGG" id="rno:365751"/>
<dbReference type="UCSC" id="RGD:1306943">
    <property type="organism name" value="rat"/>
</dbReference>
<dbReference type="AGR" id="RGD:1306943"/>
<dbReference type="CTD" id="84675"/>
<dbReference type="RGD" id="1306943">
    <property type="gene designation" value="Trim55"/>
</dbReference>
<dbReference type="VEuPathDB" id="HostDB:ENSRNOG00000012723"/>
<dbReference type="eggNOG" id="KOG2177">
    <property type="taxonomic scope" value="Eukaryota"/>
</dbReference>
<dbReference type="HOGENOM" id="CLU_013137_5_3_1"/>
<dbReference type="InParanoid" id="Q5PQN5"/>
<dbReference type="OrthoDB" id="68682at9989"/>
<dbReference type="PhylomeDB" id="Q5PQN5"/>
<dbReference type="TreeFam" id="TF331669"/>
<dbReference type="PRO" id="PR:Q5PQN5"/>
<dbReference type="Proteomes" id="UP000002494">
    <property type="component" value="Chromosome 2"/>
</dbReference>
<dbReference type="Bgee" id="ENSRNOG00000012723">
    <property type="expression patterns" value="Expressed in heart and 9 other cell types or tissues"/>
</dbReference>
<dbReference type="GO" id="GO:0005737">
    <property type="term" value="C:cytoplasm"/>
    <property type="evidence" value="ECO:0000318"/>
    <property type="project" value="GO_Central"/>
</dbReference>
<dbReference type="GO" id="GO:0005634">
    <property type="term" value="C:nucleus"/>
    <property type="evidence" value="ECO:0007669"/>
    <property type="project" value="UniProtKB-SubCell"/>
</dbReference>
<dbReference type="GO" id="GO:0042802">
    <property type="term" value="F:identical protein binding"/>
    <property type="evidence" value="ECO:0000266"/>
    <property type="project" value="RGD"/>
</dbReference>
<dbReference type="GO" id="GO:0030674">
    <property type="term" value="F:protein-macromolecule adaptor activity"/>
    <property type="evidence" value="ECO:0000266"/>
    <property type="project" value="RGD"/>
</dbReference>
<dbReference type="GO" id="GO:0061630">
    <property type="term" value="F:ubiquitin protein ligase activity"/>
    <property type="evidence" value="ECO:0000266"/>
    <property type="project" value="RGD"/>
</dbReference>
<dbReference type="GO" id="GO:0008270">
    <property type="term" value="F:zinc ion binding"/>
    <property type="evidence" value="ECO:0007669"/>
    <property type="project" value="UniProtKB-KW"/>
</dbReference>
<dbReference type="GO" id="GO:0050904">
    <property type="term" value="P:diapedesis"/>
    <property type="evidence" value="ECO:0000266"/>
    <property type="project" value="RGD"/>
</dbReference>
<dbReference type="GO" id="GO:0045087">
    <property type="term" value="P:innate immune response"/>
    <property type="evidence" value="ECO:0000318"/>
    <property type="project" value="GO_Central"/>
</dbReference>
<dbReference type="GO" id="GO:0002523">
    <property type="term" value="P:leukocyte migration involved in inflammatory response"/>
    <property type="evidence" value="ECO:0000266"/>
    <property type="project" value="RGD"/>
</dbReference>
<dbReference type="GO" id="GO:1905517">
    <property type="term" value="P:macrophage migration"/>
    <property type="evidence" value="ECO:0000266"/>
    <property type="project" value="RGD"/>
</dbReference>
<dbReference type="GO" id="GO:1901224">
    <property type="term" value="P:positive regulation of non-canonical NF-kappaB signal transduction"/>
    <property type="evidence" value="ECO:0000266"/>
    <property type="project" value="RGD"/>
</dbReference>
<dbReference type="GO" id="GO:0070936">
    <property type="term" value="P:protein K48-linked ubiquitination"/>
    <property type="evidence" value="ECO:0000266"/>
    <property type="project" value="RGD"/>
</dbReference>
<dbReference type="CDD" id="cd19832">
    <property type="entry name" value="Bbox2_MuRF2_C-II"/>
    <property type="match status" value="1"/>
</dbReference>
<dbReference type="CDD" id="cd16760">
    <property type="entry name" value="RING-HC_MuRF2"/>
    <property type="match status" value="1"/>
</dbReference>
<dbReference type="FunFam" id="3.30.40.10:FF:000014">
    <property type="entry name" value="probable E3 ubiquitin-protein ligase MID2"/>
    <property type="match status" value="1"/>
</dbReference>
<dbReference type="FunFam" id="1.20.5.170:FF:000022">
    <property type="entry name" value="Tripartite motif containing 55"/>
    <property type="match status" value="1"/>
</dbReference>
<dbReference type="FunFam" id="3.30.160.60:FF:000140">
    <property type="entry name" value="Tripartite motif containing 55"/>
    <property type="match status" value="1"/>
</dbReference>
<dbReference type="Gene3D" id="1.20.5.170">
    <property type="match status" value="1"/>
</dbReference>
<dbReference type="Gene3D" id="3.30.160.60">
    <property type="entry name" value="Classic Zinc Finger"/>
    <property type="match status" value="1"/>
</dbReference>
<dbReference type="Gene3D" id="3.30.40.10">
    <property type="entry name" value="Zinc/RING finger domain, C3HC4 (zinc finger)"/>
    <property type="match status" value="1"/>
</dbReference>
<dbReference type="InterPro" id="IPR017903">
    <property type="entry name" value="COS_domain"/>
</dbReference>
<dbReference type="InterPro" id="IPR050617">
    <property type="entry name" value="E3_ligase_FN3/SPRY"/>
</dbReference>
<dbReference type="InterPro" id="IPR027370">
    <property type="entry name" value="Znf-RING_euk"/>
</dbReference>
<dbReference type="InterPro" id="IPR000315">
    <property type="entry name" value="Znf_B-box"/>
</dbReference>
<dbReference type="InterPro" id="IPR001841">
    <property type="entry name" value="Znf_RING"/>
</dbReference>
<dbReference type="InterPro" id="IPR013083">
    <property type="entry name" value="Znf_RING/FYVE/PHD"/>
</dbReference>
<dbReference type="InterPro" id="IPR017907">
    <property type="entry name" value="Znf_RING_CS"/>
</dbReference>
<dbReference type="PANTHER" id="PTHR24099">
    <property type="entry name" value="E3 UBIQUITIN-PROTEIN LIGASE TRIM36-RELATED"/>
    <property type="match status" value="1"/>
</dbReference>
<dbReference type="PANTHER" id="PTHR24099:SF17">
    <property type="entry name" value="TRIPARTITE MOTIF CONTAINING 55"/>
    <property type="match status" value="1"/>
</dbReference>
<dbReference type="Pfam" id="PF00643">
    <property type="entry name" value="zf-B_box"/>
    <property type="match status" value="1"/>
</dbReference>
<dbReference type="Pfam" id="PF13445">
    <property type="entry name" value="zf-RING_UBOX"/>
    <property type="match status" value="1"/>
</dbReference>
<dbReference type="SMART" id="SM00336">
    <property type="entry name" value="BBOX"/>
    <property type="match status" value="1"/>
</dbReference>
<dbReference type="SMART" id="SM00184">
    <property type="entry name" value="RING"/>
    <property type="match status" value="1"/>
</dbReference>
<dbReference type="SUPFAM" id="SSF57845">
    <property type="entry name" value="B-box zinc-binding domain"/>
    <property type="match status" value="1"/>
</dbReference>
<dbReference type="SUPFAM" id="SSF57850">
    <property type="entry name" value="RING/U-box"/>
    <property type="match status" value="1"/>
</dbReference>
<dbReference type="PROSITE" id="PS51262">
    <property type="entry name" value="COS"/>
    <property type="match status" value="1"/>
</dbReference>
<dbReference type="PROSITE" id="PS50119">
    <property type="entry name" value="ZF_BBOX"/>
    <property type="match status" value="1"/>
</dbReference>
<dbReference type="PROSITE" id="PS00518">
    <property type="entry name" value="ZF_RING_1"/>
    <property type="match status" value="1"/>
</dbReference>
<dbReference type="PROSITE" id="PS50089">
    <property type="entry name" value="ZF_RING_2"/>
    <property type="match status" value="1"/>
</dbReference>
<gene>
    <name type="primary">Trim55</name>
    <name type="synonym">Murf2</name>
    <name type="synonym">Rnf29</name>
</gene>
<evidence type="ECO:0000250" key="1"/>
<evidence type="ECO:0000250" key="2">
    <source>
        <dbReference type="UniProtKB" id="G3X8Y1"/>
    </source>
</evidence>
<evidence type="ECO:0000250" key="3">
    <source>
        <dbReference type="UniProtKB" id="Q9BYV6"/>
    </source>
</evidence>
<evidence type="ECO:0000255" key="4"/>
<evidence type="ECO:0000255" key="5">
    <source>
        <dbReference type="PROSITE-ProRule" id="PRU00024"/>
    </source>
</evidence>
<evidence type="ECO:0000255" key="6">
    <source>
        <dbReference type="PROSITE-ProRule" id="PRU00175"/>
    </source>
</evidence>
<evidence type="ECO:0000255" key="7">
    <source>
        <dbReference type="PROSITE-ProRule" id="PRU00586"/>
    </source>
</evidence>
<evidence type="ECO:0000256" key="8">
    <source>
        <dbReference type="SAM" id="MobiDB-lite"/>
    </source>
</evidence>
<evidence type="ECO:0000305" key="9"/>